<organism>
    <name type="scientific">Xanthomonas oryzae pv. oryzae (strain KACC10331 / KXO85)</name>
    <dbReference type="NCBI Taxonomy" id="291331"/>
    <lineage>
        <taxon>Bacteria</taxon>
        <taxon>Pseudomonadati</taxon>
        <taxon>Pseudomonadota</taxon>
        <taxon>Gammaproteobacteria</taxon>
        <taxon>Lysobacterales</taxon>
        <taxon>Lysobacteraceae</taxon>
        <taxon>Xanthomonas</taxon>
    </lineage>
</organism>
<reference key="1">
    <citation type="journal article" date="2005" name="Nucleic Acids Res.">
        <title>The genome sequence of Xanthomonas oryzae pathovar oryzae KACC10331, the bacterial blight pathogen of rice.</title>
        <authorList>
            <person name="Lee B.-M."/>
            <person name="Park Y.-J."/>
            <person name="Park D.-S."/>
            <person name="Kang H.-W."/>
            <person name="Kim J.-G."/>
            <person name="Song E.-S."/>
            <person name="Park I.-C."/>
            <person name="Yoon U.-H."/>
            <person name="Hahn J.-H."/>
            <person name="Koo B.-S."/>
            <person name="Lee G.-B."/>
            <person name="Kim H."/>
            <person name="Park H.-S."/>
            <person name="Yoon K.-O."/>
            <person name="Kim J.-H."/>
            <person name="Jung C.-H."/>
            <person name="Koh N.-H."/>
            <person name="Seo J.-S."/>
            <person name="Go S.-J."/>
        </authorList>
    </citation>
    <scope>NUCLEOTIDE SEQUENCE [LARGE SCALE GENOMIC DNA]</scope>
    <source>
        <strain>KACC10331 / KXO85</strain>
    </source>
</reference>
<protein>
    <recommendedName>
        <fullName evidence="1">Lipoprotein signal peptidase</fullName>
        <ecNumber evidence="1">3.4.23.36</ecNumber>
    </recommendedName>
    <alternativeName>
        <fullName evidence="1">Prolipoprotein signal peptidase</fullName>
    </alternativeName>
    <alternativeName>
        <fullName evidence="1">Signal peptidase II</fullName>
        <shortName evidence="1">SPase II</shortName>
    </alternativeName>
</protein>
<gene>
    <name evidence="1" type="primary">lspA</name>
    <name type="ordered locus">XOO1627</name>
</gene>
<comment type="function">
    <text evidence="1">This protein specifically catalyzes the removal of signal peptides from prolipoproteins.</text>
</comment>
<comment type="catalytic activity">
    <reaction evidence="1">
        <text>Release of signal peptides from bacterial membrane prolipoproteins. Hydrolyzes -Xaa-Yaa-Zaa-|-(S,diacylglyceryl)Cys-, in which Xaa is hydrophobic (preferably Leu), and Yaa (Ala or Ser) and Zaa (Gly or Ala) have small, neutral side chains.</text>
        <dbReference type="EC" id="3.4.23.36"/>
    </reaction>
</comment>
<comment type="pathway">
    <text evidence="1">Protein modification; lipoprotein biosynthesis (signal peptide cleavage).</text>
</comment>
<comment type="subcellular location">
    <subcellularLocation>
        <location evidence="1">Cell inner membrane</location>
        <topology evidence="1">Multi-pass membrane protein</topology>
    </subcellularLocation>
</comment>
<comment type="similarity">
    <text evidence="1">Belongs to the peptidase A8 family.</text>
</comment>
<comment type="sequence caution" evidence="2">
    <conflict type="erroneous initiation">
        <sequence resource="EMBL-CDS" id="AAW74881"/>
    </conflict>
</comment>
<proteinExistence type="inferred from homology"/>
<name>LSPA_XANOR</name>
<feature type="chain" id="PRO_0000289462" description="Lipoprotein signal peptidase">
    <location>
        <begin position="1"/>
        <end position="166"/>
    </location>
</feature>
<feature type="transmembrane region" description="Helical" evidence="1">
    <location>
        <begin position="10"/>
        <end position="30"/>
    </location>
</feature>
<feature type="transmembrane region" description="Helical" evidence="1">
    <location>
        <begin position="68"/>
        <end position="88"/>
    </location>
</feature>
<feature type="transmembrane region" description="Helical" evidence="1">
    <location>
        <begin position="94"/>
        <end position="114"/>
    </location>
</feature>
<feature type="transmembrane region" description="Helical" evidence="1">
    <location>
        <begin position="138"/>
        <end position="158"/>
    </location>
</feature>
<feature type="active site" evidence="1">
    <location>
        <position position="124"/>
    </location>
</feature>
<feature type="active site" evidence="1">
    <location>
        <position position="142"/>
    </location>
</feature>
<sequence>MSQRPNPSALIWLLLSALVIGLDQWSKAWVLSSLPEYTSVPVIDGFWNWYRTYNTGAAFSFLSDAGGWQLWFFTALAMGISGLLAFWLSRTARGHWRSALPYALVIGGAIGNVIDRLMHGHVVDFIQWYIGSHTWPSFNIADSAIVGGAIGIAVFGLFDKAGKQAS</sequence>
<dbReference type="EC" id="3.4.23.36" evidence="1"/>
<dbReference type="EMBL" id="AE013598">
    <property type="protein sequence ID" value="AAW74881.1"/>
    <property type="status" value="ALT_INIT"/>
    <property type="molecule type" value="Genomic_DNA"/>
</dbReference>
<dbReference type="SMR" id="Q5H2E0"/>
<dbReference type="STRING" id="291331.XOO1627"/>
<dbReference type="KEGG" id="xoo:XOO1627"/>
<dbReference type="HOGENOM" id="CLU_083252_4_0_6"/>
<dbReference type="UniPathway" id="UPA00665"/>
<dbReference type="Proteomes" id="UP000006735">
    <property type="component" value="Chromosome"/>
</dbReference>
<dbReference type="GO" id="GO:0005886">
    <property type="term" value="C:plasma membrane"/>
    <property type="evidence" value="ECO:0007669"/>
    <property type="project" value="UniProtKB-SubCell"/>
</dbReference>
<dbReference type="GO" id="GO:0004190">
    <property type="term" value="F:aspartic-type endopeptidase activity"/>
    <property type="evidence" value="ECO:0007669"/>
    <property type="project" value="UniProtKB-UniRule"/>
</dbReference>
<dbReference type="GO" id="GO:0006508">
    <property type="term" value="P:proteolysis"/>
    <property type="evidence" value="ECO:0007669"/>
    <property type="project" value="UniProtKB-KW"/>
</dbReference>
<dbReference type="HAMAP" id="MF_00161">
    <property type="entry name" value="LspA"/>
    <property type="match status" value="1"/>
</dbReference>
<dbReference type="InterPro" id="IPR001872">
    <property type="entry name" value="Peptidase_A8"/>
</dbReference>
<dbReference type="NCBIfam" id="TIGR00077">
    <property type="entry name" value="lspA"/>
    <property type="match status" value="1"/>
</dbReference>
<dbReference type="PANTHER" id="PTHR33695">
    <property type="entry name" value="LIPOPROTEIN SIGNAL PEPTIDASE"/>
    <property type="match status" value="1"/>
</dbReference>
<dbReference type="PANTHER" id="PTHR33695:SF1">
    <property type="entry name" value="LIPOPROTEIN SIGNAL PEPTIDASE"/>
    <property type="match status" value="1"/>
</dbReference>
<dbReference type="Pfam" id="PF01252">
    <property type="entry name" value="Peptidase_A8"/>
    <property type="match status" value="1"/>
</dbReference>
<dbReference type="PRINTS" id="PR00781">
    <property type="entry name" value="LIPOSIGPTASE"/>
</dbReference>
<dbReference type="PROSITE" id="PS00855">
    <property type="entry name" value="SPASE_II"/>
    <property type="match status" value="1"/>
</dbReference>
<accession>Q5H2E0</accession>
<keyword id="KW-0064">Aspartyl protease</keyword>
<keyword id="KW-0997">Cell inner membrane</keyword>
<keyword id="KW-1003">Cell membrane</keyword>
<keyword id="KW-0378">Hydrolase</keyword>
<keyword id="KW-0472">Membrane</keyword>
<keyword id="KW-0645">Protease</keyword>
<keyword id="KW-1185">Reference proteome</keyword>
<keyword id="KW-0812">Transmembrane</keyword>
<keyword id="KW-1133">Transmembrane helix</keyword>
<evidence type="ECO:0000255" key="1">
    <source>
        <dbReference type="HAMAP-Rule" id="MF_00161"/>
    </source>
</evidence>
<evidence type="ECO:0000305" key="2"/>